<comment type="function">
    <text evidence="6 7 9">Involved in lipid metabolism and lipid droplet (LD) morphology, number, and size (PubMed:18093937, PubMed:18250201). Facilitates initiation of LD formation, and ensures that vectorial budding of LDs from the ER is directed towards the cytoplasm (PubMed:25540432).</text>
</comment>
<comment type="interaction">
    <interactant intactId="EBI-35851">
        <id>Q06058</id>
    </interactant>
    <interactant intactId="EBI-21668">
        <id>P25587</id>
        <label>LDB16</label>
    </interactant>
    <organismsDiffer>false</organismsDiffer>
    <experiments>8</experiments>
</comment>
<comment type="interaction">
    <interactant intactId="EBI-35851">
        <id>Q06058</id>
    </interactant>
    <interactant intactId="EBI-35851">
        <id>Q06058</id>
        <label>SEI1</label>
    </interactant>
    <organismsDiffer>false</organismsDiffer>
    <experiments>2</experiments>
</comment>
<comment type="subcellular location">
    <subcellularLocation>
        <location evidence="6 7">Endoplasmic reticulum membrane</location>
        <topology evidence="6 7">Multi-pass membrane protein</topology>
    </subcellularLocation>
    <text evidence="6">Concentrates at endoplasmic reticulum lipid droplet junctions.</text>
</comment>
<comment type="induction">
    <text evidence="2">By calcium shortage.</text>
</comment>
<comment type="disruption phenotype">
    <text evidence="8">Produces supersized LDs that are up to 50 times the volume of those in wild-type cells.</text>
</comment>
<comment type="miscellaneous">
    <text evidence="4">Present with 846 molecules/cell in log phase SD medium.</text>
</comment>
<comment type="similarity">
    <text evidence="12">Belongs to the seipin family.</text>
</comment>
<proteinExistence type="evidence at protein level"/>
<protein>
    <recommendedName>
        <fullName evidence="15">Seipin</fullName>
    </recommendedName>
    <alternativeName>
        <fullName evidence="10">Few lipid droplets protein 1</fullName>
    </alternativeName>
</protein>
<accession>Q06058</accession>
<accession>D6VZ37</accession>
<feature type="chain" id="PRO_0000247216" description="Seipin">
    <location>
        <begin position="1"/>
        <end position="285"/>
    </location>
</feature>
<feature type="topological domain" description="Cytoplasmic" evidence="13 14">
    <location>
        <begin position="1"/>
        <end position="16"/>
    </location>
</feature>
<feature type="transmembrane region" description="Helical" evidence="1">
    <location>
        <begin position="17"/>
        <end position="37"/>
    </location>
</feature>
<feature type="topological domain" description="Lumenal" evidence="13 14">
    <location>
        <begin position="38"/>
        <end position="244"/>
    </location>
</feature>
<feature type="transmembrane region" description="Helical" evidence="1">
    <location>
        <begin position="245"/>
        <end position="265"/>
    </location>
</feature>
<feature type="topological domain" description="Cytoplasmic" evidence="3 5">
    <location>
        <begin position="266"/>
        <end position="285"/>
    </location>
</feature>
<feature type="helix" evidence="17">
    <location>
        <begin position="19"/>
        <end position="44"/>
    </location>
</feature>
<feature type="strand" evidence="17">
    <location>
        <begin position="51"/>
        <end position="54"/>
    </location>
</feature>
<feature type="helix" evidence="17">
    <location>
        <begin position="55"/>
        <end position="57"/>
    </location>
</feature>
<feature type="strand" evidence="17">
    <location>
        <begin position="58"/>
        <end position="61"/>
    </location>
</feature>
<feature type="strand" evidence="17">
    <location>
        <begin position="64"/>
        <end position="66"/>
    </location>
</feature>
<feature type="strand" evidence="17">
    <location>
        <begin position="68"/>
        <end position="72"/>
    </location>
</feature>
<feature type="strand" evidence="17">
    <location>
        <begin position="74"/>
        <end position="77"/>
    </location>
</feature>
<feature type="strand" evidence="17">
    <location>
        <begin position="89"/>
        <end position="91"/>
    </location>
</feature>
<feature type="strand" evidence="17">
    <location>
        <begin position="95"/>
        <end position="98"/>
    </location>
</feature>
<feature type="strand" evidence="17">
    <location>
        <begin position="101"/>
        <end position="114"/>
    </location>
</feature>
<feature type="strand" evidence="17">
    <location>
        <begin position="121"/>
        <end position="132"/>
    </location>
</feature>
<feature type="strand" evidence="17">
    <location>
        <begin position="148"/>
        <end position="158"/>
    </location>
</feature>
<feature type="helix" evidence="17">
    <location>
        <begin position="168"/>
        <end position="173"/>
    </location>
</feature>
<feature type="helix" evidence="17">
    <location>
        <begin position="178"/>
        <end position="185"/>
    </location>
</feature>
<feature type="strand" evidence="17">
    <location>
        <begin position="188"/>
        <end position="199"/>
    </location>
</feature>
<feature type="strand" evidence="17">
    <location>
        <begin position="202"/>
        <end position="214"/>
    </location>
</feature>
<feature type="strand" evidence="17">
    <location>
        <begin position="217"/>
        <end position="220"/>
    </location>
</feature>
<feature type="strand" evidence="17">
    <location>
        <begin position="225"/>
        <end position="229"/>
    </location>
</feature>
<feature type="helix" evidence="17">
    <location>
        <begin position="235"/>
        <end position="242"/>
    </location>
</feature>
<feature type="helix" evidence="17">
    <location>
        <begin position="244"/>
        <end position="263"/>
    </location>
</feature>
<dbReference type="EMBL" id="U19729">
    <property type="protein sequence ID" value="AAB82342.1"/>
    <property type="molecule type" value="Genomic_DNA"/>
</dbReference>
<dbReference type="EMBL" id="BK006945">
    <property type="protein sequence ID" value="DAA09703.1"/>
    <property type="molecule type" value="Genomic_DNA"/>
</dbReference>
<dbReference type="PIR" id="S55960">
    <property type="entry name" value="S55960"/>
</dbReference>
<dbReference type="RefSeq" id="NP_013508.3">
    <property type="nucleotide sequence ID" value="NM_001182292.3"/>
</dbReference>
<dbReference type="PDB" id="7RSL">
    <property type="method" value="EM"/>
    <property type="resolution" value="3.45 A"/>
    <property type="chains" value="A/B/C/D/E/F/G/H/I/J=1-285"/>
</dbReference>
<dbReference type="PDBsum" id="7RSL"/>
<dbReference type="EMDB" id="EMD-24674"/>
<dbReference type="SMR" id="Q06058"/>
<dbReference type="BioGRID" id="31661">
    <property type="interactions" value="286"/>
</dbReference>
<dbReference type="ComplexPortal" id="CPX-3342">
    <property type="entry name" value="Seipin complex"/>
</dbReference>
<dbReference type="FunCoup" id="Q06058">
    <property type="interactions" value="22"/>
</dbReference>
<dbReference type="IntAct" id="Q06058">
    <property type="interactions" value="11"/>
</dbReference>
<dbReference type="MINT" id="Q06058"/>
<dbReference type="STRING" id="4932.YLR404W"/>
<dbReference type="PaxDb" id="4932-YLR404W"/>
<dbReference type="PeptideAtlas" id="Q06058"/>
<dbReference type="EnsemblFungi" id="YLR404W_mRNA">
    <property type="protein sequence ID" value="YLR404W"/>
    <property type="gene ID" value="YLR404W"/>
</dbReference>
<dbReference type="GeneID" id="851120"/>
<dbReference type="KEGG" id="sce:YLR404W"/>
<dbReference type="AGR" id="SGD:S000004396"/>
<dbReference type="SGD" id="S000004396">
    <property type="gene designation" value="SEI1"/>
</dbReference>
<dbReference type="VEuPathDB" id="FungiDB:YLR404W"/>
<dbReference type="eggNOG" id="ENOG502S0BA">
    <property type="taxonomic scope" value="Eukaryota"/>
</dbReference>
<dbReference type="HOGENOM" id="CLU_061225_0_0_1"/>
<dbReference type="InParanoid" id="Q06058"/>
<dbReference type="OMA" id="FLQWSSY"/>
<dbReference type="OrthoDB" id="4053690at2759"/>
<dbReference type="BioCyc" id="YEAST:G3O-32466-MONOMER"/>
<dbReference type="BioGRID-ORCS" id="851120">
    <property type="hits" value="1 hit in 10 CRISPR screens"/>
</dbReference>
<dbReference type="PRO" id="PR:Q06058"/>
<dbReference type="Proteomes" id="UP000002311">
    <property type="component" value="Chromosome XII"/>
</dbReference>
<dbReference type="RNAct" id="Q06058">
    <property type="molecule type" value="protein"/>
</dbReference>
<dbReference type="GO" id="GO:0032541">
    <property type="term" value="C:cortical endoplasmic reticulum"/>
    <property type="evidence" value="ECO:0000314"/>
    <property type="project" value="SGD"/>
</dbReference>
<dbReference type="GO" id="GO:0005783">
    <property type="term" value="C:endoplasmic reticulum"/>
    <property type="evidence" value="ECO:0000314"/>
    <property type="project" value="SGD"/>
</dbReference>
<dbReference type="GO" id="GO:0005789">
    <property type="term" value="C:endoplasmic reticulum membrane"/>
    <property type="evidence" value="ECO:0000314"/>
    <property type="project" value="ComplexPortal"/>
</dbReference>
<dbReference type="GO" id="GO:0005811">
    <property type="term" value="C:lipid droplet"/>
    <property type="evidence" value="ECO:0000314"/>
    <property type="project" value="ComplexPortal"/>
</dbReference>
<dbReference type="GO" id="GO:0042802">
    <property type="term" value="F:identical protein binding"/>
    <property type="evidence" value="ECO:0000353"/>
    <property type="project" value="IntAct"/>
</dbReference>
<dbReference type="GO" id="GO:0055090">
    <property type="term" value="P:acylglycerol homeostasis"/>
    <property type="evidence" value="ECO:0000315"/>
    <property type="project" value="SGD"/>
</dbReference>
<dbReference type="GO" id="GO:0140042">
    <property type="term" value="P:lipid droplet formation"/>
    <property type="evidence" value="ECO:0000315"/>
    <property type="project" value="ComplexPortal"/>
</dbReference>
<dbReference type="GO" id="GO:0034389">
    <property type="term" value="P:lipid droplet organization"/>
    <property type="evidence" value="ECO:0000315"/>
    <property type="project" value="SGD"/>
</dbReference>
<dbReference type="GO" id="GO:0006629">
    <property type="term" value="P:lipid metabolic process"/>
    <property type="evidence" value="ECO:0007669"/>
    <property type="project" value="UniProtKB-KW"/>
</dbReference>
<dbReference type="GO" id="GO:0090155">
    <property type="term" value="P:negative regulation of sphingolipid biosynthetic process"/>
    <property type="evidence" value="ECO:0000315"/>
    <property type="project" value="SGD"/>
</dbReference>
<dbReference type="GO" id="GO:0055091">
    <property type="term" value="P:phospholipid homeostasis"/>
    <property type="evidence" value="ECO:0000315"/>
    <property type="project" value="SGD"/>
</dbReference>
<dbReference type="GO" id="GO:0046889">
    <property type="term" value="P:positive regulation of lipid biosynthetic process"/>
    <property type="evidence" value="ECO:0000315"/>
    <property type="project" value="SGD"/>
</dbReference>
<dbReference type="GO" id="GO:0008104">
    <property type="term" value="P:protein localization"/>
    <property type="evidence" value="ECO:0000315"/>
    <property type="project" value="SGD"/>
</dbReference>
<dbReference type="GO" id="GO:1990044">
    <property type="term" value="P:protein localization to lipid droplet"/>
    <property type="evidence" value="ECO:0000315"/>
    <property type="project" value="ComplexPortal"/>
</dbReference>
<dbReference type="GO" id="GO:0019216">
    <property type="term" value="P:regulation of lipid metabolic process"/>
    <property type="evidence" value="ECO:0000303"/>
    <property type="project" value="ComplexPortal"/>
</dbReference>
<dbReference type="CDD" id="cd23994">
    <property type="entry name" value="Seipin_Sei1_like"/>
    <property type="match status" value="1"/>
</dbReference>
<gene>
    <name evidence="11" type="primary">SEI1</name>
    <name evidence="10" type="synonym">FLD1</name>
    <name evidence="16" type="ordered locus">YLR404W</name>
</gene>
<name>SEI1_YEAST</name>
<reference key="1">
    <citation type="journal article" date="1997" name="Nature">
        <title>The nucleotide sequence of Saccharomyces cerevisiae chromosome XII.</title>
        <authorList>
            <person name="Johnston M."/>
            <person name="Hillier L.W."/>
            <person name="Riles L."/>
            <person name="Albermann K."/>
            <person name="Andre B."/>
            <person name="Ansorge W."/>
            <person name="Benes V."/>
            <person name="Brueckner M."/>
            <person name="Delius H."/>
            <person name="Dubois E."/>
            <person name="Duesterhoeft A."/>
            <person name="Entian K.-D."/>
            <person name="Floeth M."/>
            <person name="Goffeau A."/>
            <person name="Hebling U."/>
            <person name="Heumann K."/>
            <person name="Heuss-Neitzel D."/>
            <person name="Hilbert H."/>
            <person name="Hilger F."/>
            <person name="Kleine K."/>
            <person name="Koetter P."/>
            <person name="Louis E.J."/>
            <person name="Messenguy F."/>
            <person name="Mewes H.-W."/>
            <person name="Miosga T."/>
            <person name="Moestl D."/>
            <person name="Mueller-Auer S."/>
            <person name="Nentwich U."/>
            <person name="Obermaier B."/>
            <person name="Piravandi E."/>
            <person name="Pohl T.M."/>
            <person name="Portetelle D."/>
            <person name="Purnelle B."/>
            <person name="Rechmann S."/>
            <person name="Rieger M."/>
            <person name="Rinke M."/>
            <person name="Rose M."/>
            <person name="Scharfe M."/>
            <person name="Scherens B."/>
            <person name="Scholler P."/>
            <person name="Schwager C."/>
            <person name="Schwarz S."/>
            <person name="Underwood A.P."/>
            <person name="Urrestarazu L.A."/>
            <person name="Vandenbol M."/>
            <person name="Verhasselt P."/>
            <person name="Vierendeels F."/>
            <person name="Voet M."/>
            <person name="Volckaert G."/>
            <person name="Voss H."/>
            <person name="Wambutt R."/>
            <person name="Wedler E."/>
            <person name="Wedler H."/>
            <person name="Zimmermann F.K."/>
            <person name="Zollner A."/>
            <person name="Hani J."/>
            <person name="Hoheisel J.D."/>
        </authorList>
    </citation>
    <scope>NUCLEOTIDE SEQUENCE [LARGE SCALE GENOMIC DNA]</scope>
    <source>
        <strain>ATCC 204508 / S288c</strain>
    </source>
</reference>
<reference key="2">
    <citation type="journal article" date="2014" name="G3 (Bethesda)">
        <title>The reference genome sequence of Saccharomyces cerevisiae: Then and now.</title>
        <authorList>
            <person name="Engel S.R."/>
            <person name="Dietrich F.S."/>
            <person name="Fisk D.G."/>
            <person name="Binkley G."/>
            <person name="Balakrishnan R."/>
            <person name="Costanzo M.C."/>
            <person name="Dwight S.S."/>
            <person name="Hitz B.C."/>
            <person name="Karra K."/>
            <person name="Nash R.S."/>
            <person name="Weng S."/>
            <person name="Wong E.D."/>
            <person name="Lloyd P."/>
            <person name="Skrzypek M.S."/>
            <person name="Miyasato S.R."/>
            <person name="Simison M."/>
            <person name="Cherry J.M."/>
        </authorList>
    </citation>
    <scope>GENOME REANNOTATION</scope>
    <source>
        <strain>ATCC 204508 / S288c</strain>
    </source>
</reference>
<reference key="3">
    <citation type="journal article" date="2002" name="Cell Calcium">
        <title>Genome-wide analysis of yeast transcription upon calcium shortage.</title>
        <authorList>
            <person name="Lombardia L.J."/>
            <person name="Becerra M."/>
            <person name="Rodriguez-Belmonte E."/>
            <person name="Hauser N.C."/>
            <person name="Cerdan M.E."/>
        </authorList>
    </citation>
    <scope>INDUCTION</scope>
</reference>
<reference key="4">
    <citation type="journal article" date="2003" name="J. Biol. Chem.">
        <title>Topology models for 37 Saccharomyces cerevisiae membrane proteins based on C-terminal reporter fusions and predictions.</title>
        <authorList>
            <person name="Kim H."/>
            <person name="Melen K."/>
            <person name="von Heijne G."/>
        </authorList>
    </citation>
    <scope>TOPOLOGY</scope>
</reference>
<reference key="5">
    <citation type="journal article" date="2003" name="Nature">
        <title>Global analysis of protein expression in yeast.</title>
        <authorList>
            <person name="Ghaemmaghami S."/>
            <person name="Huh W.-K."/>
            <person name="Bower K."/>
            <person name="Howson R.W."/>
            <person name="Belle A."/>
            <person name="Dephoure N."/>
            <person name="O'Shea E.K."/>
            <person name="Weissman J.S."/>
        </authorList>
    </citation>
    <scope>LEVEL OF PROTEIN EXPRESSION [LARGE SCALE ANALYSIS]</scope>
</reference>
<reference key="6">
    <citation type="journal article" date="2006" name="Proc. Natl. Acad. Sci. U.S.A.">
        <title>A global topology map of the Saccharomyces cerevisiae membrane proteome.</title>
        <authorList>
            <person name="Kim H."/>
            <person name="Melen K."/>
            <person name="Oesterberg M."/>
            <person name="von Heijne G."/>
        </authorList>
    </citation>
    <scope>TOPOLOGY [LARGE SCALE ANALYSIS]</scope>
    <source>
        <strain>ATCC 208353 / W303-1A</strain>
    </source>
</reference>
<reference key="7">
    <citation type="journal article" date="2007" name="Proc. Natl. Acad. Sci. U.S.A.">
        <title>The lipodystrophy protein seipin is found at endoplasmic reticulum lipid droplet junctions and is important for droplet morphology.</title>
        <authorList>
            <person name="Szymanski K.M."/>
            <person name="Binns D."/>
            <person name="Bartz R."/>
            <person name="Grishin N.V."/>
            <person name="Li W.-P."/>
            <person name="Agarwal A.K."/>
            <person name="Garg A."/>
            <person name="Anderson R.G.W."/>
            <person name="Goodman J.M."/>
        </authorList>
    </citation>
    <scope>FUNCTION</scope>
    <scope>SUBCELLULAR LOCATION</scope>
</reference>
<reference key="8">
    <citation type="journal article" date="2008" name="J. Cell Biol.">
        <title>Fld1p, a functional homologue of human seipin, regulates the size of lipid droplets in yeast.</title>
        <authorList>
            <person name="Fei W."/>
            <person name="Shui G."/>
            <person name="Gaeta B."/>
            <person name="Du X."/>
            <person name="Kuerschner L."/>
            <person name="Li P."/>
            <person name="Brown A.J."/>
            <person name="Wenk M.R."/>
            <person name="Parton R.G."/>
            <person name="Yang H."/>
        </authorList>
    </citation>
    <scope>FUNCTION</scope>
    <scope>SUBCELLULAR LOCATION</scope>
</reference>
<reference key="9">
    <citation type="journal article" date="2011" name="PLoS Genet.">
        <title>A role for phosphatidic acid in the formation of 'supersized' lipid droplets.</title>
        <authorList>
            <person name="Fei W."/>
            <person name="Shui G."/>
            <person name="Zhang Y."/>
            <person name="Krahmer N."/>
            <person name="Ferguson C."/>
            <person name="Kapterian T.S."/>
            <person name="Lin R.C."/>
            <person name="Dawes I.W."/>
            <person name="Brown A.J."/>
            <person name="Li P."/>
            <person name="Huang X."/>
            <person name="Parton R.G."/>
            <person name="Wenk M.R."/>
            <person name="Walther T.C."/>
            <person name="Yang H."/>
        </authorList>
    </citation>
    <scope>DISRUPTION PHENOTYPE</scope>
</reference>
<reference key="10">
    <citation type="journal article" date="2015" name="Mol. Biol. Cell">
        <title>Seipin performs dissectible functions in promoting lipid droplet biogenesis and regulating droplet morphology.</title>
        <authorList>
            <person name="Cartwright B.R."/>
            <person name="Binns D.D."/>
            <person name="Hilton C.L."/>
            <person name="Han S."/>
            <person name="Gao Q."/>
            <person name="Goodman J.M."/>
        </authorList>
    </citation>
    <scope>FUNCTION</scope>
</reference>
<organism>
    <name type="scientific">Saccharomyces cerevisiae (strain ATCC 204508 / S288c)</name>
    <name type="common">Baker's yeast</name>
    <dbReference type="NCBI Taxonomy" id="559292"/>
    <lineage>
        <taxon>Eukaryota</taxon>
        <taxon>Fungi</taxon>
        <taxon>Dikarya</taxon>
        <taxon>Ascomycota</taxon>
        <taxon>Saccharomycotina</taxon>
        <taxon>Saccharomycetes</taxon>
        <taxon>Saccharomycetales</taxon>
        <taxon>Saccharomycetaceae</taxon>
        <taxon>Saccharomyces</taxon>
    </lineage>
</organism>
<keyword id="KW-0002">3D-structure</keyword>
<keyword id="KW-0256">Endoplasmic reticulum</keyword>
<keyword id="KW-0443">Lipid metabolism</keyword>
<keyword id="KW-0472">Membrane</keyword>
<keyword id="KW-1185">Reference proteome</keyword>
<keyword id="KW-0812">Transmembrane</keyword>
<keyword id="KW-1133">Transmembrane helix</keyword>
<sequence length="285" mass="32590">MKINVSRPLQFLQWSSYIVVAFLIQLLIILPLSILIYHDFYLRLLPADSSNVVPLNTFNILNGVQFGTKFFQSIKSIPVGTDLPQTIDNGLSQLIPMRDNMEYKLDLNLQLYCQSKTDHLNLDNLLIDVYRGPGPLLGAPGGSNSKDEKIFHTSRPIVCLALTDSMSPQEIEQLGPSRLDVYDEEWLNTIRIEDKISLESSYETISVFLKTEIAQRNLIIHPESGIKFRMNFEQGLRNLMLRKRFLSYIIGISIFHCIICVLFFITGCTAFIFVRKGQEKSKKHS</sequence>
<evidence type="ECO:0000255" key="1"/>
<evidence type="ECO:0000269" key="2">
    <source>
    </source>
</evidence>
<evidence type="ECO:0000269" key="3">
    <source>
    </source>
</evidence>
<evidence type="ECO:0000269" key="4">
    <source>
    </source>
</evidence>
<evidence type="ECO:0000269" key="5">
    <source>
    </source>
</evidence>
<evidence type="ECO:0000269" key="6">
    <source>
    </source>
</evidence>
<evidence type="ECO:0000269" key="7">
    <source>
    </source>
</evidence>
<evidence type="ECO:0000269" key="8">
    <source>
    </source>
</evidence>
<evidence type="ECO:0000269" key="9">
    <source>
    </source>
</evidence>
<evidence type="ECO:0000303" key="10">
    <source>
    </source>
</evidence>
<evidence type="ECO:0000303" key="11">
    <source>
    </source>
</evidence>
<evidence type="ECO:0000305" key="12"/>
<evidence type="ECO:0000305" key="13">
    <source>
    </source>
</evidence>
<evidence type="ECO:0000305" key="14">
    <source>
    </source>
</evidence>
<evidence type="ECO:0000305" key="15">
    <source>
    </source>
</evidence>
<evidence type="ECO:0000312" key="16">
    <source>
        <dbReference type="SGD" id="S000004396"/>
    </source>
</evidence>
<evidence type="ECO:0007829" key="17">
    <source>
        <dbReference type="PDB" id="7RSL"/>
    </source>
</evidence>